<reference key="1">
    <citation type="journal article" date="1989" name="Eur. J. Biochem.">
        <title>Nucleotide sequence of the glyceraldehyde-3-phosphate dehydrogenase gene from the mesophilic methanogenic archaebacteria Methanobacterium bryantii and Methanobacterium formicicum. Comparison with the respective gene structure of the closely related extreme thermophile Methanothermus fervidus.</title>
        <authorList>
            <person name="Fabry S."/>
            <person name="Lang J."/>
            <person name="Niermann T."/>
            <person name="Vingron M."/>
            <person name="Hensel R."/>
        </authorList>
    </citation>
    <scope>NUCLEOTIDE SEQUENCE [GENOMIC DNA]</scope>
</reference>
<protein>
    <recommendedName>
        <fullName>Glyceraldehyde-3-phosphate dehydrogenase</fullName>
        <shortName>GAPDH</shortName>
        <ecNumber>1.2.1.59</ecNumber>
    </recommendedName>
    <alternativeName>
        <fullName>NAD(P)-dependent glyceraldehyde-3-phosphate dehydrogenase</fullName>
    </alternativeName>
</protein>
<sequence>MKSVGINGYGTIGKRVADAVSAQDDMKIVGVTKRSPDFEARMAVEKGYDLYISAPERENSFEEAGIKVTGTAEELFEKLDIVVDCTPEGIGAKNKEGTYEKMGLKATFQGGEKHDQIGLSFNSFSNYKDVIGKDYARVVSCNTTGLCRTLNPINDLCGIKKVRAVMVRRGADPSQVKKGPINAIVPNPPTVPSHHGPDVQTVMYDLNITTMALLVPTTLMHQHNLMVELESSVSIDDIKDKLNETPRVLLLKAKEGLGSTAEFMEYAKELGRSRNDLFEIGVWEESLNIVDGELYYMQAIHQESDVVPENVDAIRAMLEMEDNPSKSIEKTNKAMGIL</sequence>
<proteinExistence type="inferred from homology"/>
<feature type="chain" id="PRO_0000145721" description="Glyceraldehyde-3-phosphate dehydrogenase">
    <location>
        <begin position="1"/>
        <end position="338"/>
    </location>
</feature>
<feature type="active site" description="Nucleophile" evidence="1">
    <location>
        <position position="141"/>
    </location>
</feature>
<feature type="binding site" evidence="1">
    <location>
        <begin position="11"/>
        <end position="12"/>
    </location>
    <ligand>
        <name>NAD(+)</name>
        <dbReference type="ChEBI" id="CHEBI:57540"/>
    </ligand>
</feature>
<feature type="binding site" evidence="1">
    <location>
        <position position="111"/>
    </location>
    <ligand>
        <name>NAD(+)</name>
        <dbReference type="ChEBI" id="CHEBI:57540"/>
    </ligand>
</feature>
<feature type="binding site" evidence="1">
    <location>
        <begin position="140"/>
        <end position="142"/>
    </location>
    <ligand>
        <name>D-glyceraldehyde 3-phosphate</name>
        <dbReference type="ChEBI" id="CHEBI:59776"/>
    </ligand>
</feature>
<feature type="binding site" evidence="1">
    <location>
        <position position="169"/>
    </location>
    <ligand>
        <name>NAD(+)</name>
        <dbReference type="ChEBI" id="CHEBI:57540"/>
    </ligand>
</feature>
<feature type="binding site" evidence="1">
    <location>
        <begin position="195"/>
        <end position="196"/>
    </location>
    <ligand>
        <name>D-glyceraldehyde 3-phosphate</name>
        <dbReference type="ChEBI" id="CHEBI:59776"/>
    </ligand>
</feature>
<feature type="binding site" evidence="1">
    <location>
        <position position="302"/>
    </location>
    <ligand>
        <name>NAD(+)</name>
        <dbReference type="ChEBI" id="CHEBI:57540"/>
    </ligand>
</feature>
<evidence type="ECO:0000250" key="1"/>
<evidence type="ECO:0000305" key="2"/>
<keyword id="KW-0963">Cytoplasm</keyword>
<keyword id="KW-0324">Glycolysis</keyword>
<keyword id="KW-0520">NAD</keyword>
<keyword id="KW-0521">NADP</keyword>
<keyword id="KW-0560">Oxidoreductase</keyword>
<organism>
    <name type="scientific">Methanobacterium formicicum</name>
    <dbReference type="NCBI Taxonomy" id="2162"/>
    <lineage>
        <taxon>Archaea</taxon>
        <taxon>Methanobacteriati</taxon>
        <taxon>Methanobacteriota</taxon>
        <taxon>Methanomada group</taxon>
        <taxon>Methanobacteria</taxon>
        <taxon>Methanobacteriales</taxon>
        <taxon>Methanobacteriaceae</taxon>
        <taxon>Methanobacterium</taxon>
    </lineage>
</organism>
<accession>P19315</accession>
<comment type="catalytic activity">
    <reaction>
        <text>D-glyceraldehyde 3-phosphate + phosphate + NADP(+) = (2R)-3-phospho-glyceroyl phosphate + NADPH + H(+)</text>
        <dbReference type="Rhea" id="RHEA:10296"/>
        <dbReference type="ChEBI" id="CHEBI:15378"/>
        <dbReference type="ChEBI" id="CHEBI:43474"/>
        <dbReference type="ChEBI" id="CHEBI:57604"/>
        <dbReference type="ChEBI" id="CHEBI:57783"/>
        <dbReference type="ChEBI" id="CHEBI:58349"/>
        <dbReference type="ChEBI" id="CHEBI:59776"/>
        <dbReference type="EC" id="1.2.1.59"/>
    </reaction>
</comment>
<comment type="catalytic activity">
    <reaction>
        <text>D-glyceraldehyde 3-phosphate + phosphate + NAD(+) = (2R)-3-phospho-glyceroyl phosphate + NADH + H(+)</text>
        <dbReference type="Rhea" id="RHEA:10300"/>
        <dbReference type="ChEBI" id="CHEBI:15378"/>
        <dbReference type="ChEBI" id="CHEBI:43474"/>
        <dbReference type="ChEBI" id="CHEBI:57540"/>
        <dbReference type="ChEBI" id="CHEBI:57604"/>
        <dbReference type="ChEBI" id="CHEBI:57945"/>
        <dbReference type="ChEBI" id="CHEBI:59776"/>
        <dbReference type="EC" id="1.2.1.59"/>
    </reaction>
</comment>
<comment type="pathway">
    <text>Carbohydrate degradation; glycolysis; pyruvate from D-glyceraldehyde 3-phosphate: step 1/5.</text>
</comment>
<comment type="subunit">
    <text evidence="1">Homotetramer.</text>
</comment>
<comment type="subcellular location">
    <subcellularLocation>
        <location evidence="1">Cytoplasm</location>
    </subcellularLocation>
</comment>
<comment type="similarity">
    <text evidence="2">Belongs to the glyceraldehyde-3-phosphate dehydrogenase family.</text>
</comment>
<gene>
    <name type="primary">gap</name>
</gene>
<dbReference type="EC" id="1.2.1.59"/>
<dbReference type="EMBL" id="X14632">
    <property type="protein sequence ID" value="CAB37402.1"/>
    <property type="molecule type" value="Genomic_DNA"/>
</dbReference>
<dbReference type="PIR" id="S02803">
    <property type="entry name" value="S02803"/>
</dbReference>
<dbReference type="SMR" id="P19315"/>
<dbReference type="STRING" id="2162.BRM9_1942"/>
<dbReference type="UniPathway" id="UPA00109">
    <property type="reaction ID" value="UER00184"/>
</dbReference>
<dbReference type="GO" id="GO:0005737">
    <property type="term" value="C:cytoplasm"/>
    <property type="evidence" value="ECO:0007669"/>
    <property type="project" value="UniProtKB-SubCell"/>
</dbReference>
<dbReference type="GO" id="GO:0008839">
    <property type="term" value="F:4-hydroxy-tetrahydrodipicolinate reductase"/>
    <property type="evidence" value="ECO:0007669"/>
    <property type="project" value="InterPro"/>
</dbReference>
<dbReference type="GO" id="GO:0004365">
    <property type="term" value="F:glyceraldehyde-3-phosphate dehydrogenase (NAD+) (phosphorylating) activity"/>
    <property type="evidence" value="ECO:0007669"/>
    <property type="project" value="UniProtKB-UniRule"/>
</dbReference>
<dbReference type="GO" id="GO:0047100">
    <property type="term" value="F:glyceraldehyde-3-phosphate dehydrogenase (NADP+) (phosphorylating) activity"/>
    <property type="evidence" value="ECO:0007669"/>
    <property type="project" value="RHEA"/>
</dbReference>
<dbReference type="GO" id="GO:0051287">
    <property type="term" value="F:NAD binding"/>
    <property type="evidence" value="ECO:0007669"/>
    <property type="project" value="InterPro"/>
</dbReference>
<dbReference type="GO" id="GO:0050661">
    <property type="term" value="F:NADP binding"/>
    <property type="evidence" value="ECO:0007669"/>
    <property type="project" value="InterPro"/>
</dbReference>
<dbReference type="GO" id="GO:0006096">
    <property type="term" value="P:glycolytic process"/>
    <property type="evidence" value="ECO:0007669"/>
    <property type="project" value="UniProtKB-UniRule"/>
</dbReference>
<dbReference type="GO" id="GO:0009089">
    <property type="term" value="P:lysine biosynthetic process via diaminopimelate"/>
    <property type="evidence" value="ECO:0007669"/>
    <property type="project" value="InterPro"/>
</dbReference>
<dbReference type="CDD" id="cd18127">
    <property type="entry name" value="GAPDH_II_C"/>
    <property type="match status" value="1"/>
</dbReference>
<dbReference type="CDD" id="cd02278">
    <property type="entry name" value="GAPDH_II_N"/>
    <property type="match status" value="1"/>
</dbReference>
<dbReference type="Gene3D" id="3.30.360.10">
    <property type="entry name" value="Dihydrodipicolinate Reductase, domain 2"/>
    <property type="match status" value="1"/>
</dbReference>
<dbReference type="Gene3D" id="3.40.50.720">
    <property type="entry name" value="NAD(P)-binding Rossmann-like Domain"/>
    <property type="match status" value="1"/>
</dbReference>
<dbReference type="HAMAP" id="MF_00559">
    <property type="entry name" value="G3P_dehdrog_arch"/>
    <property type="match status" value="1"/>
</dbReference>
<dbReference type="InterPro" id="IPR000846">
    <property type="entry name" value="DapB_N"/>
</dbReference>
<dbReference type="InterPro" id="IPR020831">
    <property type="entry name" value="GlycerAld/Erythrose_P_DH"/>
</dbReference>
<dbReference type="InterPro" id="IPR020830">
    <property type="entry name" value="GlycerAld_3-P_DH_AS"/>
</dbReference>
<dbReference type="InterPro" id="IPR020829">
    <property type="entry name" value="GlycerAld_3-P_DH_cat"/>
</dbReference>
<dbReference type="InterPro" id="IPR020828">
    <property type="entry name" value="GlycerAld_3-P_DH_NAD(P)-bd"/>
</dbReference>
<dbReference type="InterPro" id="IPR006436">
    <property type="entry name" value="Glyceraldehyde-3-P_DH_2_arc"/>
</dbReference>
<dbReference type="InterPro" id="IPR036291">
    <property type="entry name" value="NAD(P)-bd_dom_sf"/>
</dbReference>
<dbReference type="NCBIfam" id="TIGR01546">
    <property type="entry name" value="GAPDH-II_archae"/>
    <property type="match status" value="1"/>
</dbReference>
<dbReference type="NCBIfam" id="NF003251">
    <property type="entry name" value="PRK04207.1"/>
    <property type="match status" value="1"/>
</dbReference>
<dbReference type="Pfam" id="PF01113">
    <property type="entry name" value="DapB_N"/>
    <property type="match status" value="1"/>
</dbReference>
<dbReference type="Pfam" id="PF02800">
    <property type="entry name" value="Gp_dh_C"/>
    <property type="match status" value="1"/>
</dbReference>
<dbReference type="PIRSF" id="PIRSF000149">
    <property type="entry name" value="GAP_DH"/>
    <property type="match status" value="1"/>
</dbReference>
<dbReference type="SMART" id="SM00846">
    <property type="entry name" value="Gp_dh_N"/>
    <property type="match status" value="1"/>
</dbReference>
<dbReference type="SUPFAM" id="SSF55347">
    <property type="entry name" value="Glyceraldehyde-3-phosphate dehydrogenase-like, C-terminal domain"/>
    <property type="match status" value="1"/>
</dbReference>
<dbReference type="SUPFAM" id="SSF51735">
    <property type="entry name" value="NAD(P)-binding Rossmann-fold domains"/>
    <property type="match status" value="1"/>
</dbReference>
<dbReference type="PROSITE" id="PS00071">
    <property type="entry name" value="GAPDH"/>
    <property type="match status" value="1"/>
</dbReference>
<name>G3P_METFO</name>